<feature type="chain" id="PRO_1000081620" description="Large ribosomal subunit protein bL35">
    <location>
        <begin position="1"/>
        <end position="64"/>
    </location>
</feature>
<evidence type="ECO:0000255" key="1">
    <source>
        <dbReference type="HAMAP-Rule" id="MF_00514"/>
    </source>
</evidence>
<evidence type="ECO:0000305" key="2"/>
<reference key="1">
    <citation type="submission" date="2008-01" db="EMBL/GenBank/DDBJ databases">
        <title>Complete sequence of Pseudomonas putida GB-1.</title>
        <authorList>
            <consortium name="US DOE Joint Genome Institute"/>
            <person name="Copeland A."/>
            <person name="Lucas S."/>
            <person name="Lapidus A."/>
            <person name="Barry K."/>
            <person name="Glavina del Rio T."/>
            <person name="Dalin E."/>
            <person name="Tice H."/>
            <person name="Pitluck S."/>
            <person name="Bruce D."/>
            <person name="Goodwin L."/>
            <person name="Chertkov O."/>
            <person name="Brettin T."/>
            <person name="Detter J.C."/>
            <person name="Han C."/>
            <person name="Kuske C.R."/>
            <person name="Schmutz J."/>
            <person name="Larimer F."/>
            <person name="Land M."/>
            <person name="Hauser L."/>
            <person name="Kyrpides N."/>
            <person name="Kim E."/>
            <person name="McCarthy J.K."/>
            <person name="Richardson P."/>
        </authorList>
    </citation>
    <scope>NUCLEOTIDE SEQUENCE [LARGE SCALE GENOMIC DNA]</scope>
    <source>
        <strain>GB-1</strain>
    </source>
</reference>
<sequence>MPKMKTKSGAAKRFLKTASGFKHKHAFKSHILTKMSTKRKRQLRGASLLHPSDVAKVERMLRVR</sequence>
<organism>
    <name type="scientific">Pseudomonas putida (strain GB-1)</name>
    <dbReference type="NCBI Taxonomy" id="76869"/>
    <lineage>
        <taxon>Bacteria</taxon>
        <taxon>Pseudomonadati</taxon>
        <taxon>Pseudomonadota</taxon>
        <taxon>Gammaproteobacteria</taxon>
        <taxon>Pseudomonadales</taxon>
        <taxon>Pseudomonadaceae</taxon>
        <taxon>Pseudomonas</taxon>
    </lineage>
</organism>
<comment type="similarity">
    <text evidence="1">Belongs to the bacterial ribosomal protein bL35 family.</text>
</comment>
<proteinExistence type="inferred from homology"/>
<accession>B0KKR6</accession>
<gene>
    <name evidence="1" type="primary">rpmI</name>
    <name type="ordered locus">PputGB1_3479</name>
</gene>
<name>RL35_PSEPG</name>
<keyword id="KW-0687">Ribonucleoprotein</keyword>
<keyword id="KW-0689">Ribosomal protein</keyword>
<protein>
    <recommendedName>
        <fullName evidence="1">Large ribosomal subunit protein bL35</fullName>
    </recommendedName>
    <alternativeName>
        <fullName evidence="2">50S ribosomal protein L35</fullName>
    </alternativeName>
</protein>
<dbReference type="EMBL" id="CP000926">
    <property type="protein sequence ID" value="ABY99370.1"/>
    <property type="molecule type" value="Genomic_DNA"/>
</dbReference>
<dbReference type="RefSeq" id="WP_003250667.1">
    <property type="nucleotide sequence ID" value="NC_010322.1"/>
</dbReference>
<dbReference type="SMR" id="B0KKR6"/>
<dbReference type="GeneID" id="97167548"/>
<dbReference type="KEGG" id="ppg:PputGB1_3479"/>
<dbReference type="eggNOG" id="COG0291">
    <property type="taxonomic scope" value="Bacteria"/>
</dbReference>
<dbReference type="HOGENOM" id="CLU_169643_1_1_6"/>
<dbReference type="Proteomes" id="UP000002157">
    <property type="component" value="Chromosome"/>
</dbReference>
<dbReference type="GO" id="GO:0022625">
    <property type="term" value="C:cytosolic large ribosomal subunit"/>
    <property type="evidence" value="ECO:0007669"/>
    <property type="project" value="TreeGrafter"/>
</dbReference>
<dbReference type="GO" id="GO:0003735">
    <property type="term" value="F:structural constituent of ribosome"/>
    <property type="evidence" value="ECO:0007669"/>
    <property type="project" value="InterPro"/>
</dbReference>
<dbReference type="GO" id="GO:0006412">
    <property type="term" value="P:translation"/>
    <property type="evidence" value="ECO:0007669"/>
    <property type="project" value="UniProtKB-UniRule"/>
</dbReference>
<dbReference type="FunFam" id="4.10.410.60:FF:000001">
    <property type="entry name" value="50S ribosomal protein L35"/>
    <property type="match status" value="1"/>
</dbReference>
<dbReference type="Gene3D" id="4.10.410.60">
    <property type="match status" value="1"/>
</dbReference>
<dbReference type="HAMAP" id="MF_00514">
    <property type="entry name" value="Ribosomal_bL35"/>
    <property type="match status" value="1"/>
</dbReference>
<dbReference type="InterPro" id="IPR001706">
    <property type="entry name" value="Ribosomal_bL35"/>
</dbReference>
<dbReference type="InterPro" id="IPR021137">
    <property type="entry name" value="Ribosomal_bL35-like"/>
</dbReference>
<dbReference type="InterPro" id="IPR018265">
    <property type="entry name" value="Ribosomal_bL35_CS"/>
</dbReference>
<dbReference type="InterPro" id="IPR037229">
    <property type="entry name" value="Ribosomal_bL35_sf"/>
</dbReference>
<dbReference type="NCBIfam" id="TIGR00001">
    <property type="entry name" value="rpmI_bact"/>
    <property type="match status" value="1"/>
</dbReference>
<dbReference type="PANTHER" id="PTHR33343">
    <property type="entry name" value="54S RIBOSOMAL PROTEIN BL35M"/>
    <property type="match status" value="1"/>
</dbReference>
<dbReference type="PANTHER" id="PTHR33343:SF1">
    <property type="entry name" value="LARGE RIBOSOMAL SUBUNIT PROTEIN BL35M"/>
    <property type="match status" value="1"/>
</dbReference>
<dbReference type="Pfam" id="PF01632">
    <property type="entry name" value="Ribosomal_L35p"/>
    <property type="match status" value="1"/>
</dbReference>
<dbReference type="PRINTS" id="PR00064">
    <property type="entry name" value="RIBOSOMALL35"/>
</dbReference>
<dbReference type="SUPFAM" id="SSF143034">
    <property type="entry name" value="L35p-like"/>
    <property type="match status" value="1"/>
</dbReference>
<dbReference type="PROSITE" id="PS00936">
    <property type="entry name" value="RIBOSOMAL_L35"/>
    <property type="match status" value="1"/>
</dbReference>